<evidence type="ECO:0000250" key="1"/>
<evidence type="ECO:0000255" key="2"/>
<evidence type="ECO:0000305" key="3"/>
<protein>
    <recommendedName>
        <fullName>Golgi apparatus membrane protein TVP18</fullName>
    </recommendedName>
</protein>
<organism>
    <name type="scientific">Candida glabrata (strain ATCC 2001 / BCRC 20586 / JCM 3761 / NBRC 0622 / NRRL Y-65 / CBS 138)</name>
    <name type="common">Yeast</name>
    <name type="synonym">Nakaseomyces glabratus</name>
    <dbReference type="NCBI Taxonomy" id="284593"/>
    <lineage>
        <taxon>Eukaryota</taxon>
        <taxon>Fungi</taxon>
        <taxon>Dikarya</taxon>
        <taxon>Ascomycota</taxon>
        <taxon>Saccharomycotina</taxon>
        <taxon>Saccharomycetes</taxon>
        <taxon>Saccharomycetales</taxon>
        <taxon>Saccharomycetaceae</taxon>
        <taxon>Nakaseomyces</taxon>
    </lineage>
</organism>
<dbReference type="EMBL" id="CR380957">
    <property type="protein sequence ID" value="CAG61317.1"/>
    <property type="molecule type" value="Genomic_DNA"/>
</dbReference>
<dbReference type="RefSeq" id="XP_448356.1">
    <property type="nucleotide sequence ID" value="XM_448356.1"/>
</dbReference>
<dbReference type="FunCoup" id="Q6FN38">
    <property type="interactions" value="65"/>
</dbReference>
<dbReference type="STRING" id="284593.Q6FN38"/>
<dbReference type="GlyCosmos" id="Q6FN38">
    <property type="glycosylation" value="1 site, No reported glycans"/>
</dbReference>
<dbReference type="EnsemblFungi" id="CAGL0K03025g-T">
    <property type="protein sequence ID" value="CAGL0K03025g-T-p1"/>
    <property type="gene ID" value="CAGL0K03025g"/>
</dbReference>
<dbReference type="KEGG" id="cgr:2890218"/>
<dbReference type="CGD" id="CAL0134597">
    <property type="gene designation" value="CAGL0K03025g"/>
</dbReference>
<dbReference type="VEuPathDB" id="FungiDB:B1J91_K03025g"/>
<dbReference type="VEuPathDB" id="FungiDB:CAGL0K03025g"/>
<dbReference type="eggNOG" id="ENOG502S3AC">
    <property type="taxonomic scope" value="Eukaryota"/>
</dbReference>
<dbReference type="HOGENOM" id="CLU_118698_1_0_1"/>
<dbReference type="InParanoid" id="Q6FN38"/>
<dbReference type="OMA" id="IYAQWLG"/>
<dbReference type="Proteomes" id="UP000002428">
    <property type="component" value="Chromosome K"/>
</dbReference>
<dbReference type="GO" id="GO:0000139">
    <property type="term" value="C:Golgi membrane"/>
    <property type="evidence" value="ECO:0007669"/>
    <property type="project" value="UniProtKB-SubCell"/>
</dbReference>
<dbReference type="GO" id="GO:0016192">
    <property type="term" value="P:vesicle-mediated transport"/>
    <property type="evidence" value="ECO:0007669"/>
    <property type="project" value="EnsemblFungi"/>
</dbReference>
<dbReference type="InterPro" id="IPR019365">
    <property type="entry name" value="TVP18/Ca-channel_flower"/>
</dbReference>
<dbReference type="PANTHER" id="PTHR13314">
    <property type="entry name" value="CALCIUM CHANNEL FLOWER HOMOLOG"/>
    <property type="match status" value="1"/>
</dbReference>
<dbReference type="PANTHER" id="PTHR13314:SF2">
    <property type="entry name" value="CALCIUM CHANNEL FLOWER HOMOLOG"/>
    <property type="match status" value="1"/>
</dbReference>
<dbReference type="Pfam" id="PF10233">
    <property type="entry name" value="Cg6151-P"/>
    <property type="match status" value="1"/>
</dbReference>
<dbReference type="SMART" id="SM01077">
    <property type="entry name" value="Cg6151-P"/>
    <property type="match status" value="1"/>
</dbReference>
<proteinExistence type="inferred from homology"/>
<reference key="1">
    <citation type="journal article" date="2004" name="Nature">
        <title>Genome evolution in yeasts.</title>
        <authorList>
            <person name="Dujon B."/>
            <person name="Sherman D."/>
            <person name="Fischer G."/>
            <person name="Durrens P."/>
            <person name="Casaregola S."/>
            <person name="Lafontaine I."/>
            <person name="de Montigny J."/>
            <person name="Marck C."/>
            <person name="Neuveglise C."/>
            <person name="Talla E."/>
            <person name="Goffard N."/>
            <person name="Frangeul L."/>
            <person name="Aigle M."/>
            <person name="Anthouard V."/>
            <person name="Babour A."/>
            <person name="Barbe V."/>
            <person name="Barnay S."/>
            <person name="Blanchin S."/>
            <person name="Beckerich J.-M."/>
            <person name="Beyne E."/>
            <person name="Bleykasten C."/>
            <person name="Boisrame A."/>
            <person name="Boyer J."/>
            <person name="Cattolico L."/>
            <person name="Confanioleri F."/>
            <person name="de Daruvar A."/>
            <person name="Despons L."/>
            <person name="Fabre E."/>
            <person name="Fairhead C."/>
            <person name="Ferry-Dumazet H."/>
            <person name="Groppi A."/>
            <person name="Hantraye F."/>
            <person name="Hennequin C."/>
            <person name="Jauniaux N."/>
            <person name="Joyet P."/>
            <person name="Kachouri R."/>
            <person name="Kerrest A."/>
            <person name="Koszul R."/>
            <person name="Lemaire M."/>
            <person name="Lesur I."/>
            <person name="Ma L."/>
            <person name="Muller H."/>
            <person name="Nicaud J.-M."/>
            <person name="Nikolski M."/>
            <person name="Oztas S."/>
            <person name="Ozier-Kalogeropoulos O."/>
            <person name="Pellenz S."/>
            <person name="Potier S."/>
            <person name="Richard G.-F."/>
            <person name="Straub M.-L."/>
            <person name="Suleau A."/>
            <person name="Swennen D."/>
            <person name="Tekaia F."/>
            <person name="Wesolowski-Louvel M."/>
            <person name="Westhof E."/>
            <person name="Wirth B."/>
            <person name="Zeniou-Meyer M."/>
            <person name="Zivanovic Y."/>
            <person name="Bolotin-Fukuhara M."/>
            <person name="Thierry A."/>
            <person name="Bouchier C."/>
            <person name="Caudron B."/>
            <person name="Scarpelli C."/>
            <person name="Gaillardin C."/>
            <person name="Weissenbach J."/>
            <person name="Wincker P."/>
            <person name="Souciet J.-L."/>
        </authorList>
    </citation>
    <scope>NUCLEOTIDE SEQUENCE [LARGE SCALE GENOMIC DNA]</scope>
    <source>
        <strain>ATCC 2001 / BCRC 20586 / JCM 3761 / NBRC 0622 / NRRL Y-65 / CBS 138</strain>
    </source>
</reference>
<name>TVP18_CANGA</name>
<gene>
    <name type="primary">TVP18</name>
    <name type="ordered locus">CAGL0K03025g</name>
</gene>
<sequence>MALGITQFINIAGLLKDLKSFNFSVYGKWFGYINIFLCIALGIANLFHVSAVIAFGIVGIVQGLIILFIEIPFLLKICPLSDRFIEFIKRFETNGYRCIFYTLMAIVQYCSLAVMTTSLLVLGITLTISAVSYGIAFTKHQEFANTNIIKNPTDEDFPHDAVVREML</sequence>
<comment type="function">
    <text evidence="1">Golgi membrane protein involved in vesicular trafficking.</text>
</comment>
<comment type="subcellular location">
    <subcellularLocation>
        <location evidence="1">Golgi apparatus membrane</location>
        <topology evidence="1">Multi-pass membrane protein</topology>
    </subcellularLocation>
</comment>
<comment type="similarity">
    <text evidence="3">Belongs to the TVP18 family.</text>
</comment>
<accession>Q6FN38</accession>
<keyword id="KW-0325">Glycoprotein</keyword>
<keyword id="KW-0333">Golgi apparatus</keyword>
<keyword id="KW-0472">Membrane</keyword>
<keyword id="KW-1185">Reference proteome</keyword>
<keyword id="KW-0812">Transmembrane</keyword>
<keyword id="KW-1133">Transmembrane helix</keyword>
<feature type="chain" id="PRO_0000343016" description="Golgi apparatus membrane protein TVP18">
    <location>
        <begin position="1"/>
        <end position="167"/>
    </location>
</feature>
<feature type="transmembrane region" description="Helical" evidence="2">
    <location>
        <begin position="23"/>
        <end position="43"/>
    </location>
</feature>
<feature type="transmembrane region" description="Helical" evidence="2">
    <location>
        <begin position="49"/>
        <end position="69"/>
    </location>
</feature>
<feature type="transmembrane region" description="Helical" evidence="2">
    <location>
        <begin position="95"/>
        <end position="115"/>
    </location>
</feature>
<feature type="transmembrane region" description="Helical" evidence="2">
    <location>
        <begin position="117"/>
        <end position="137"/>
    </location>
</feature>
<feature type="glycosylation site" description="N-linked (GlcNAc...) asparagine" evidence="2">
    <location>
        <position position="22"/>
    </location>
</feature>